<sequence length="316" mass="36412">MSFASETKKELTNLEMKECCEKSELSALLRMNGSLSFSNRRLSIDIQTENAAIARRIYTLLKKGYDVTVELLVRKKMRLKKNNVYIVRLVEKSREILADLHIVRDDFSFIRNISQELIEKKCCKRSYLRGAFLAGGSVNNPETSSYHLEIFSLYKEHNDSICELMNGFDLNSKTLERRKGYITYLKEAEKITEFLNIIGAHNALLRFEDIRIVRDMRNSVNRLVNCETANLNKTIGAALRQIENIRYIDETVGLDILPDKLREIAQLRRDYQDVTLKELGEMVSGGKISKSGINHRLRKIDEIAEKLRAGETVAKK</sequence>
<name>WHIA_BACMK</name>
<gene>
    <name evidence="1" type="primary">whiA</name>
    <name type="ordered locus">BcerKBAB4_4946</name>
</gene>
<comment type="function">
    <text evidence="1">Involved in cell division and chromosome segregation.</text>
</comment>
<comment type="similarity">
    <text evidence="1">Belongs to the WhiA family.</text>
</comment>
<organism>
    <name type="scientific">Bacillus mycoides (strain KBAB4)</name>
    <name type="common">Bacillus weihenstephanensis</name>
    <dbReference type="NCBI Taxonomy" id="315730"/>
    <lineage>
        <taxon>Bacteria</taxon>
        <taxon>Bacillati</taxon>
        <taxon>Bacillota</taxon>
        <taxon>Bacilli</taxon>
        <taxon>Bacillales</taxon>
        <taxon>Bacillaceae</taxon>
        <taxon>Bacillus</taxon>
        <taxon>Bacillus cereus group</taxon>
    </lineage>
</organism>
<proteinExistence type="inferred from homology"/>
<evidence type="ECO:0000255" key="1">
    <source>
        <dbReference type="HAMAP-Rule" id="MF_01420"/>
    </source>
</evidence>
<keyword id="KW-0131">Cell cycle</keyword>
<keyword id="KW-0132">Cell division</keyword>
<keyword id="KW-0238">DNA-binding</keyword>
<feature type="chain" id="PRO_0000376445" description="Probable cell division protein WhiA">
    <location>
        <begin position="1"/>
        <end position="316"/>
    </location>
</feature>
<feature type="DNA-binding region" description="H-T-H motif" evidence="1">
    <location>
        <begin position="275"/>
        <end position="309"/>
    </location>
</feature>
<protein>
    <recommendedName>
        <fullName evidence="1">Probable cell division protein WhiA</fullName>
    </recommendedName>
</protein>
<reference key="1">
    <citation type="journal article" date="2008" name="Chem. Biol. Interact.">
        <title>Extending the Bacillus cereus group genomics to putative food-borne pathogens of different toxicity.</title>
        <authorList>
            <person name="Lapidus A."/>
            <person name="Goltsman E."/>
            <person name="Auger S."/>
            <person name="Galleron N."/>
            <person name="Segurens B."/>
            <person name="Dossat C."/>
            <person name="Land M.L."/>
            <person name="Broussolle V."/>
            <person name="Brillard J."/>
            <person name="Guinebretiere M.-H."/>
            <person name="Sanchis V."/>
            <person name="Nguen-the C."/>
            <person name="Lereclus D."/>
            <person name="Richardson P."/>
            <person name="Wincker P."/>
            <person name="Weissenbach J."/>
            <person name="Ehrlich S.D."/>
            <person name="Sorokin A."/>
        </authorList>
    </citation>
    <scope>NUCLEOTIDE SEQUENCE [LARGE SCALE GENOMIC DNA]</scope>
    <source>
        <strain>KBAB4</strain>
    </source>
</reference>
<accession>A9VQ67</accession>
<dbReference type="EMBL" id="CP000903">
    <property type="protein sequence ID" value="ABY46094.1"/>
    <property type="molecule type" value="Genomic_DNA"/>
</dbReference>
<dbReference type="RefSeq" id="WP_002016082.1">
    <property type="nucleotide sequence ID" value="NC_010184.1"/>
</dbReference>
<dbReference type="SMR" id="A9VQ67"/>
<dbReference type="GeneID" id="66265316"/>
<dbReference type="KEGG" id="bwe:BcerKBAB4_4946"/>
<dbReference type="eggNOG" id="COG1481">
    <property type="taxonomic scope" value="Bacteria"/>
</dbReference>
<dbReference type="HOGENOM" id="CLU_053282_0_0_9"/>
<dbReference type="Proteomes" id="UP000002154">
    <property type="component" value="Chromosome"/>
</dbReference>
<dbReference type="GO" id="GO:0003677">
    <property type="term" value="F:DNA binding"/>
    <property type="evidence" value="ECO:0007669"/>
    <property type="project" value="UniProtKB-UniRule"/>
</dbReference>
<dbReference type="GO" id="GO:0051301">
    <property type="term" value="P:cell division"/>
    <property type="evidence" value="ECO:0007669"/>
    <property type="project" value="UniProtKB-UniRule"/>
</dbReference>
<dbReference type="GO" id="GO:0043937">
    <property type="term" value="P:regulation of sporulation"/>
    <property type="evidence" value="ECO:0007669"/>
    <property type="project" value="InterPro"/>
</dbReference>
<dbReference type="FunFam" id="3.10.28.10:FF:000002">
    <property type="entry name" value="Probable cell division protein WhiA"/>
    <property type="match status" value="1"/>
</dbReference>
<dbReference type="Gene3D" id="3.10.28.10">
    <property type="entry name" value="Homing endonucleases"/>
    <property type="match status" value="1"/>
</dbReference>
<dbReference type="HAMAP" id="MF_01420">
    <property type="entry name" value="HTH_type_WhiA"/>
    <property type="match status" value="1"/>
</dbReference>
<dbReference type="InterPro" id="IPR027434">
    <property type="entry name" value="Homing_endonucl"/>
</dbReference>
<dbReference type="InterPro" id="IPR018478">
    <property type="entry name" value="Sporu_reg_WhiA_N_dom"/>
</dbReference>
<dbReference type="InterPro" id="IPR003802">
    <property type="entry name" value="Sporulation_regulator_WhiA"/>
</dbReference>
<dbReference type="InterPro" id="IPR023054">
    <property type="entry name" value="Sporulation_regulator_WhiA_C"/>
</dbReference>
<dbReference type="InterPro" id="IPR039518">
    <property type="entry name" value="WhiA_LAGLIDADG_dom"/>
</dbReference>
<dbReference type="NCBIfam" id="TIGR00647">
    <property type="entry name" value="DNA_bind_WhiA"/>
    <property type="match status" value="1"/>
</dbReference>
<dbReference type="PANTHER" id="PTHR37307">
    <property type="entry name" value="CELL DIVISION PROTEIN WHIA-RELATED"/>
    <property type="match status" value="1"/>
</dbReference>
<dbReference type="PANTHER" id="PTHR37307:SF1">
    <property type="entry name" value="CELL DIVISION PROTEIN WHIA-RELATED"/>
    <property type="match status" value="1"/>
</dbReference>
<dbReference type="Pfam" id="PF02650">
    <property type="entry name" value="HTH_WhiA"/>
    <property type="match status" value="1"/>
</dbReference>
<dbReference type="Pfam" id="PF14527">
    <property type="entry name" value="LAGLIDADG_WhiA"/>
    <property type="match status" value="1"/>
</dbReference>
<dbReference type="Pfam" id="PF10298">
    <property type="entry name" value="WhiA_N"/>
    <property type="match status" value="1"/>
</dbReference>
<dbReference type="SUPFAM" id="SSF55608">
    <property type="entry name" value="Homing endonucleases"/>
    <property type="match status" value="1"/>
</dbReference>